<protein>
    <recommendedName>
        <fullName evidence="1">NH(3)-dependent NAD(+) synthetase</fullName>
        <ecNumber evidence="1">6.3.1.5</ecNumber>
    </recommendedName>
</protein>
<comment type="function">
    <text evidence="1">Catalyzes the ATP-dependent amidation of deamido-NAD to form NAD. Uses ammonia as a nitrogen source.</text>
</comment>
<comment type="catalytic activity">
    <reaction evidence="1">
        <text>deamido-NAD(+) + NH4(+) + ATP = AMP + diphosphate + NAD(+) + H(+)</text>
        <dbReference type="Rhea" id="RHEA:21188"/>
        <dbReference type="ChEBI" id="CHEBI:15378"/>
        <dbReference type="ChEBI" id="CHEBI:28938"/>
        <dbReference type="ChEBI" id="CHEBI:30616"/>
        <dbReference type="ChEBI" id="CHEBI:33019"/>
        <dbReference type="ChEBI" id="CHEBI:57540"/>
        <dbReference type="ChEBI" id="CHEBI:58437"/>
        <dbReference type="ChEBI" id="CHEBI:456215"/>
        <dbReference type="EC" id="6.3.1.5"/>
    </reaction>
</comment>
<comment type="pathway">
    <text evidence="1">Cofactor biosynthesis; NAD(+) biosynthesis; NAD(+) from deamido-NAD(+) (ammonia route): step 1/1.</text>
</comment>
<comment type="subunit">
    <text evidence="1">Homodimer.</text>
</comment>
<comment type="similarity">
    <text evidence="1">Belongs to the NAD synthetase family.</text>
</comment>
<reference key="1">
    <citation type="submission" date="2006-12" db="EMBL/GenBank/DDBJ databases">
        <authorList>
            <person name="Fouts D.E."/>
            <person name="Nelson K.E."/>
            <person name="Sebastian Y."/>
        </authorList>
    </citation>
    <scope>NUCLEOTIDE SEQUENCE [LARGE SCALE GENOMIC DNA]</scope>
    <source>
        <strain>81-176</strain>
    </source>
</reference>
<organism>
    <name type="scientific">Campylobacter jejuni subsp. jejuni serotype O:23/36 (strain 81-176)</name>
    <dbReference type="NCBI Taxonomy" id="354242"/>
    <lineage>
        <taxon>Bacteria</taxon>
        <taxon>Pseudomonadati</taxon>
        <taxon>Campylobacterota</taxon>
        <taxon>Epsilonproteobacteria</taxon>
        <taxon>Campylobacterales</taxon>
        <taxon>Campylobacteraceae</taxon>
        <taxon>Campylobacter</taxon>
    </lineage>
</organism>
<proteinExistence type="inferred from homology"/>
<feature type="chain" id="PRO_1000077542" description="NH(3)-dependent NAD(+) synthetase">
    <location>
        <begin position="1"/>
        <end position="246"/>
    </location>
</feature>
<feature type="binding site" evidence="1">
    <location>
        <begin position="29"/>
        <end position="36"/>
    </location>
    <ligand>
        <name>ATP</name>
        <dbReference type="ChEBI" id="CHEBI:30616"/>
    </ligand>
</feature>
<feature type="binding site" evidence="1">
    <location>
        <position position="35"/>
    </location>
    <ligand>
        <name>Mg(2+)</name>
        <dbReference type="ChEBI" id="CHEBI:18420"/>
    </ligand>
</feature>
<feature type="binding site" evidence="1">
    <location>
        <position position="110"/>
    </location>
    <ligand>
        <name>deamido-NAD(+)</name>
        <dbReference type="ChEBI" id="CHEBI:58437"/>
    </ligand>
</feature>
<feature type="binding site" evidence="1">
    <location>
        <position position="130"/>
    </location>
    <ligand>
        <name>ATP</name>
        <dbReference type="ChEBI" id="CHEBI:30616"/>
    </ligand>
</feature>
<feature type="binding site" evidence="1">
    <location>
        <position position="135"/>
    </location>
    <ligand>
        <name>Mg(2+)</name>
        <dbReference type="ChEBI" id="CHEBI:18420"/>
    </ligand>
</feature>
<feature type="binding site" evidence="1">
    <location>
        <position position="159"/>
    </location>
    <ligand>
        <name>ATP</name>
        <dbReference type="ChEBI" id="CHEBI:30616"/>
    </ligand>
</feature>
<feature type="binding site" evidence="1">
    <location>
        <position position="181"/>
    </location>
    <ligand>
        <name>ATP</name>
        <dbReference type="ChEBI" id="CHEBI:30616"/>
    </ligand>
</feature>
<evidence type="ECO:0000255" key="1">
    <source>
        <dbReference type="HAMAP-Rule" id="MF_00193"/>
    </source>
</evidence>
<gene>
    <name evidence="1" type="primary">nadE</name>
    <name type="ordered locus">CJJ81176_0831</name>
</gene>
<dbReference type="EC" id="6.3.1.5" evidence="1"/>
<dbReference type="EMBL" id="CP000538">
    <property type="protein sequence ID" value="EAQ72323.1"/>
    <property type="molecule type" value="Genomic_DNA"/>
</dbReference>
<dbReference type="RefSeq" id="WP_002857155.1">
    <property type="nucleotide sequence ID" value="NC_008787.1"/>
</dbReference>
<dbReference type="SMR" id="A1VZF8"/>
<dbReference type="KEGG" id="cjj:CJJ81176_0831"/>
<dbReference type="eggNOG" id="COG0171">
    <property type="taxonomic scope" value="Bacteria"/>
</dbReference>
<dbReference type="HOGENOM" id="CLU_059327_1_2_7"/>
<dbReference type="UniPathway" id="UPA00253">
    <property type="reaction ID" value="UER00333"/>
</dbReference>
<dbReference type="Proteomes" id="UP000000646">
    <property type="component" value="Chromosome"/>
</dbReference>
<dbReference type="GO" id="GO:0005737">
    <property type="term" value="C:cytoplasm"/>
    <property type="evidence" value="ECO:0007669"/>
    <property type="project" value="InterPro"/>
</dbReference>
<dbReference type="GO" id="GO:0005524">
    <property type="term" value="F:ATP binding"/>
    <property type="evidence" value="ECO:0007669"/>
    <property type="project" value="UniProtKB-UniRule"/>
</dbReference>
<dbReference type="GO" id="GO:0004359">
    <property type="term" value="F:glutaminase activity"/>
    <property type="evidence" value="ECO:0007669"/>
    <property type="project" value="InterPro"/>
</dbReference>
<dbReference type="GO" id="GO:0046872">
    <property type="term" value="F:metal ion binding"/>
    <property type="evidence" value="ECO:0007669"/>
    <property type="project" value="UniProtKB-KW"/>
</dbReference>
<dbReference type="GO" id="GO:0003952">
    <property type="term" value="F:NAD+ synthase (glutamine-hydrolyzing) activity"/>
    <property type="evidence" value="ECO:0007669"/>
    <property type="project" value="InterPro"/>
</dbReference>
<dbReference type="GO" id="GO:0008795">
    <property type="term" value="F:NAD+ synthase activity"/>
    <property type="evidence" value="ECO:0007669"/>
    <property type="project" value="UniProtKB-UniRule"/>
</dbReference>
<dbReference type="GO" id="GO:0009435">
    <property type="term" value="P:NAD biosynthetic process"/>
    <property type="evidence" value="ECO:0007669"/>
    <property type="project" value="UniProtKB-UniRule"/>
</dbReference>
<dbReference type="CDD" id="cd00553">
    <property type="entry name" value="NAD_synthase"/>
    <property type="match status" value="1"/>
</dbReference>
<dbReference type="FunFam" id="3.40.50.620:FF:000106">
    <property type="entry name" value="Glutamine-dependent NAD(+) synthetase"/>
    <property type="match status" value="1"/>
</dbReference>
<dbReference type="Gene3D" id="3.40.50.620">
    <property type="entry name" value="HUPs"/>
    <property type="match status" value="1"/>
</dbReference>
<dbReference type="HAMAP" id="MF_00193">
    <property type="entry name" value="NadE_ammonia_dep"/>
    <property type="match status" value="1"/>
</dbReference>
<dbReference type="InterPro" id="IPR022310">
    <property type="entry name" value="NAD/GMP_synthase"/>
</dbReference>
<dbReference type="InterPro" id="IPR003694">
    <property type="entry name" value="NAD_synthase"/>
</dbReference>
<dbReference type="InterPro" id="IPR022926">
    <property type="entry name" value="NH(3)-dep_NAD(+)_synth"/>
</dbReference>
<dbReference type="InterPro" id="IPR014729">
    <property type="entry name" value="Rossmann-like_a/b/a_fold"/>
</dbReference>
<dbReference type="NCBIfam" id="TIGR00552">
    <property type="entry name" value="nadE"/>
    <property type="match status" value="1"/>
</dbReference>
<dbReference type="NCBIfam" id="NF010587">
    <property type="entry name" value="PRK13980.1"/>
    <property type="match status" value="1"/>
</dbReference>
<dbReference type="PANTHER" id="PTHR23090:SF9">
    <property type="entry name" value="GLUTAMINE-DEPENDENT NAD(+) SYNTHETASE"/>
    <property type="match status" value="1"/>
</dbReference>
<dbReference type="PANTHER" id="PTHR23090">
    <property type="entry name" value="NH 3 /GLUTAMINE-DEPENDENT NAD + SYNTHETASE"/>
    <property type="match status" value="1"/>
</dbReference>
<dbReference type="Pfam" id="PF02540">
    <property type="entry name" value="NAD_synthase"/>
    <property type="match status" value="1"/>
</dbReference>
<dbReference type="SUPFAM" id="SSF52402">
    <property type="entry name" value="Adenine nucleotide alpha hydrolases-like"/>
    <property type="match status" value="1"/>
</dbReference>
<accession>A1VZF8</accession>
<keyword id="KW-0067">ATP-binding</keyword>
<keyword id="KW-0436">Ligase</keyword>
<keyword id="KW-0460">Magnesium</keyword>
<keyword id="KW-0479">Metal-binding</keyword>
<keyword id="KW-0520">NAD</keyword>
<keyword id="KW-0547">Nucleotide-binding</keyword>
<name>NADE_CAMJJ</name>
<sequence>MDWQKITEKMCDFIQEKVKNSQSQGVVLGLSGGIDSALVATLCKRALKENVFALLMPTQISNKANLEDALRLCADLNLEYKIIEIQSILDAFIKQSENTTLVSLGNFAARIRMSLLYDYSALKNSLVIGTSNKSELLLGYGTIYGDLACAFNPIGSLYKSEIYALAKYLNLHENFIKKAPSADLWENQSDEADLGFSYAKIDEGLKALETNDEKLLRTLDPSLIAMLKNRMQKNAFKGKMPEILEI</sequence>